<accession>Q49ZT7</accession>
<name>HRTB_STAS1</name>
<keyword id="KW-1003">Cell membrane</keyword>
<keyword id="KW-0472">Membrane</keyword>
<keyword id="KW-1185">Reference proteome</keyword>
<keyword id="KW-0812">Transmembrane</keyword>
<keyword id="KW-1133">Transmembrane helix</keyword>
<keyword id="KW-0813">Transport</keyword>
<proteinExistence type="inferred from homology"/>
<sequence>MKLAWQEIKYYKFRYILIMLIILLLGIMVLFISGLAQGLARENISMLDNMKSEKYVLQDNKQPQIEKSIIKPEQQNKIEDITGQEPLKMAPQTLKIDKNEEDVLMINTVKNEKPELKAGHYPTKDNEVAINNKLTADGINVGDKIKLKDGKALKVSGVLNDTMYSHSSVVMMSDNGFNTLNKQASTIYPVKDLSKSEQEKVNDISGVKVFTENDITSEIPSYQAEQAPLNMMIVSLFVISAIVLSAFFYVMTIQKIPEIGILKAIGMKTKHLLSALIIQILITTMIGVIISVAIITGLSFLMPVSMPFHVTTSNLLLVVGVFIIVAIIGAILSFIKLFKVDPIEAIGGGE</sequence>
<reference key="1">
    <citation type="journal article" date="2005" name="Proc. Natl. Acad. Sci. U.S.A.">
        <title>Whole genome sequence of Staphylococcus saprophyticus reveals the pathogenesis of uncomplicated urinary tract infection.</title>
        <authorList>
            <person name="Kuroda M."/>
            <person name="Yamashita A."/>
            <person name="Hirakawa H."/>
            <person name="Kumano M."/>
            <person name="Morikawa K."/>
            <person name="Higashide M."/>
            <person name="Maruyama A."/>
            <person name="Inose Y."/>
            <person name="Matoba K."/>
            <person name="Toh H."/>
            <person name="Kuhara S."/>
            <person name="Hattori M."/>
            <person name="Ohta T."/>
        </authorList>
    </citation>
    <scope>NUCLEOTIDE SEQUENCE [LARGE SCALE GENOMIC DNA]</scope>
    <source>
        <strain>ATCC 15305 / DSM 20229 / NCIMB 8711 / NCTC 7292 / S-41</strain>
    </source>
</reference>
<dbReference type="EMBL" id="AP008934">
    <property type="protein sequence ID" value="BAE17687.1"/>
    <property type="molecule type" value="Genomic_DNA"/>
</dbReference>
<dbReference type="RefSeq" id="WP_011302493.1">
    <property type="nucleotide sequence ID" value="NZ_MTGA01000036.1"/>
</dbReference>
<dbReference type="SMR" id="Q49ZT7"/>
<dbReference type="GeneID" id="3616835"/>
<dbReference type="KEGG" id="ssp:SSP0542"/>
<dbReference type="PATRIC" id="fig|342451.11.peg.546"/>
<dbReference type="eggNOG" id="COG0577">
    <property type="taxonomic scope" value="Bacteria"/>
</dbReference>
<dbReference type="HOGENOM" id="CLU_060907_1_0_9"/>
<dbReference type="OrthoDB" id="384327at2"/>
<dbReference type="Proteomes" id="UP000006371">
    <property type="component" value="Chromosome"/>
</dbReference>
<dbReference type="GO" id="GO:0005886">
    <property type="term" value="C:plasma membrane"/>
    <property type="evidence" value="ECO:0007669"/>
    <property type="project" value="UniProtKB-SubCell"/>
</dbReference>
<dbReference type="InterPro" id="IPR051125">
    <property type="entry name" value="ABC-4/HrtB_transporter"/>
</dbReference>
<dbReference type="InterPro" id="IPR003838">
    <property type="entry name" value="ABC3_permease_C"/>
</dbReference>
<dbReference type="PANTHER" id="PTHR43738">
    <property type="entry name" value="ABC TRANSPORTER, MEMBRANE PROTEIN"/>
    <property type="match status" value="1"/>
</dbReference>
<dbReference type="PANTHER" id="PTHR43738:SF1">
    <property type="entry name" value="HEMIN TRANSPORT SYSTEM PERMEASE PROTEIN HRTB-RELATED"/>
    <property type="match status" value="1"/>
</dbReference>
<dbReference type="Pfam" id="PF02687">
    <property type="entry name" value="FtsX"/>
    <property type="match status" value="1"/>
</dbReference>
<protein>
    <recommendedName>
        <fullName>Putative hemin transport system permease protein HrtB</fullName>
    </recommendedName>
</protein>
<feature type="chain" id="PRO_0000270532" description="Putative hemin transport system permease protein HrtB">
    <location>
        <begin position="1"/>
        <end position="350"/>
    </location>
</feature>
<feature type="transmembrane region" description="Helical" evidence="2">
    <location>
        <begin position="16"/>
        <end position="36"/>
    </location>
</feature>
<feature type="transmembrane region" description="Helical" evidence="2">
    <location>
        <begin position="233"/>
        <end position="253"/>
    </location>
</feature>
<feature type="transmembrane region" description="Helical" evidence="2">
    <location>
        <begin position="275"/>
        <end position="295"/>
    </location>
</feature>
<feature type="transmembrane region" description="Helical" evidence="2">
    <location>
        <begin position="315"/>
        <end position="335"/>
    </location>
</feature>
<comment type="function">
    <text evidence="1">Part of the ABC transporter complex hrt involved in hemin import. Responsible for the translocation of the substrate across the membrane (By similarity).</text>
</comment>
<comment type="subunit">
    <text evidence="1">The complex is composed of two ATP-binding proteins (HrtA), two transmembrane proteins (HrtB) and a solute-binding protein.</text>
</comment>
<comment type="subcellular location">
    <subcellularLocation>
        <location evidence="3">Cell membrane</location>
        <topology evidence="3">Multi-pass membrane protein</topology>
    </subcellularLocation>
</comment>
<comment type="similarity">
    <text evidence="3">Belongs to the ABC-4 integral membrane protein family. HrtB subfamily.</text>
</comment>
<evidence type="ECO:0000250" key="1"/>
<evidence type="ECO:0000255" key="2"/>
<evidence type="ECO:0000305" key="3"/>
<gene>
    <name type="primary">hrtB</name>
    <name type="ordered locus">SSP0542</name>
</gene>
<organism>
    <name type="scientific">Staphylococcus saprophyticus subsp. saprophyticus (strain ATCC 15305 / DSM 20229 / NCIMB 8711 / NCTC 7292 / S-41)</name>
    <dbReference type="NCBI Taxonomy" id="342451"/>
    <lineage>
        <taxon>Bacteria</taxon>
        <taxon>Bacillati</taxon>
        <taxon>Bacillota</taxon>
        <taxon>Bacilli</taxon>
        <taxon>Bacillales</taxon>
        <taxon>Staphylococcaceae</taxon>
        <taxon>Staphylococcus</taxon>
    </lineage>
</organism>